<evidence type="ECO:0000255" key="1">
    <source>
        <dbReference type="HAMAP-Rule" id="MF_00377"/>
    </source>
</evidence>
<sequence length="478" mass="53501">MNLTHIWKTTLSALQSQTSRHDYEALLRPAMLLSLDNGIARIGVSSPIQKEGLENRLLMPLRNALTRVVGYPVQVQVLIANQALRPEVTAAPRNGTHVALEPEPFVTEPPTPAFTSGNGNGERAVQLDLASAMRSGMLNPRYTFASFIVGSSNRLAHAACLAVADNPGQAYNPLFLYGGVGLGKTHLLHAIGNRVLDRDPEINVLYVSSEKFTNDLINAIRRQQTEEFRMRYRNIDVLLIDDIQFIAGKDATQEEFFHTFNTLHSAAKHIVISSDRPPKAILTLEERLRSRFEWGLIVDVQPPDLETRTAILRAKAEQMSVHVPDEVIDFLAHKIQSNIRELEGSLNRVAAYAELNRLPITIDTATAALADLLGNQRRRRISAEAILQIVSEHYGIEVEQLRARNRSRHVVVPRQVAMYLLREETESSLVDIGNLLGGRDHTTVMYGCEKIAEEINTDSHLRSEVMAIRERIQMMRGL</sequence>
<keyword id="KW-0067">ATP-binding</keyword>
<keyword id="KW-0963">Cytoplasm</keyword>
<keyword id="KW-0235">DNA replication</keyword>
<keyword id="KW-0238">DNA-binding</keyword>
<keyword id="KW-0446">Lipid-binding</keyword>
<keyword id="KW-0547">Nucleotide-binding</keyword>
<accession>B8GBK7</accession>
<proteinExistence type="inferred from homology"/>
<name>DNAA_CHLAD</name>
<organism>
    <name type="scientific">Chloroflexus aggregans (strain MD-66 / DSM 9485)</name>
    <dbReference type="NCBI Taxonomy" id="326427"/>
    <lineage>
        <taxon>Bacteria</taxon>
        <taxon>Bacillati</taxon>
        <taxon>Chloroflexota</taxon>
        <taxon>Chloroflexia</taxon>
        <taxon>Chloroflexales</taxon>
        <taxon>Chloroflexineae</taxon>
        <taxon>Chloroflexaceae</taxon>
        <taxon>Chloroflexus</taxon>
    </lineage>
</organism>
<feature type="chain" id="PRO_1000189787" description="Chromosomal replication initiator protein DnaA">
    <location>
        <begin position="1"/>
        <end position="478"/>
    </location>
</feature>
<feature type="region of interest" description="Domain I, interacts with DnaA modulators" evidence="1">
    <location>
        <begin position="1"/>
        <end position="71"/>
    </location>
</feature>
<feature type="region of interest" description="Domain II" evidence="1">
    <location>
        <begin position="71"/>
        <end position="136"/>
    </location>
</feature>
<feature type="region of interest" description="Domain III, AAA+ region" evidence="1">
    <location>
        <begin position="137"/>
        <end position="353"/>
    </location>
</feature>
<feature type="region of interest" description="Domain IV, binds dsDNA" evidence="1">
    <location>
        <begin position="354"/>
        <end position="478"/>
    </location>
</feature>
<feature type="binding site" evidence="1">
    <location>
        <position position="181"/>
    </location>
    <ligand>
        <name>ATP</name>
        <dbReference type="ChEBI" id="CHEBI:30616"/>
    </ligand>
</feature>
<feature type="binding site" evidence="1">
    <location>
        <position position="183"/>
    </location>
    <ligand>
        <name>ATP</name>
        <dbReference type="ChEBI" id="CHEBI:30616"/>
    </ligand>
</feature>
<feature type="binding site" evidence="1">
    <location>
        <position position="184"/>
    </location>
    <ligand>
        <name>ATP</name>
        <dbReference type="ChEBI" id="CHEBI:30616"/>
    </ligand>
</feature>
<feature type="binding site" evidence="1">
    <location>
        <position position="185"/>
    </location>
    <ligand>
        <name>ATP</name>
        <dbReference type="ChEBI" id="CHEBI:30616"/>
    </ligand>
</feature>
<comment type="function">
    <text evidence="1">Plays an essential role in the initiation and regulation of chromosomal replication. ATP-DnaA binds to the origin of replication (oriC) to initiate formation of the DNA replication initiation complex once per cell cycle. Binds the DnaA box (a 9 base pair repeat at the origin) and separates the double-stranded (ds)DNA. Forms a right-handed helical filament on oriC DNA; dsDNA binds to the exterior of the filament while single-stranded (ss)DNA is stabiized in the filament's interior. The ATP-DnaA-oriC complex binds and stabilizes one strand of the AT-rich DNA unwinding element (DUE), permitting loading of DNA polymerase. After initiation quickly degrades to an ADP-DnaA complex that is not apt for DNA replication. Binds acidic phospholipids.</text>
</comment>
<comment type="subunit">
    <text evidence="1">Oligomerizes as a right-handed, spiral filament on DNA at oriC.</text>
</comment>
<comment type="subcellular location">
    <subcellularLocation>
        <location evidence="1">Cytoplasm</location>
    </subcellularLocation>
</comment>
<comment type="domain">
    <text evidence="1">Domain I is involved in oligomerization and binding regulators, domain II is flexibile and of varying length in different bacteria, domain III forms the AAA+ region, while domain IV binds dsDNA.</text>
</comment>
<comment type="similarity">
    <text evidence="1">Belongs to the DnaA family.</text>
</comment>
<protein>
    <recommendedName>
        <fullName evidence="1">Chromosomal replication initiator protein DnaA</fullName>
    </recommendedName>
</protein>
<reference key="1">
    <citation type="submission" date="2008-12" db="EMBL/GenBank/DDBJ databases">
        <title>Complete sequence of Chloroflexus aggregans DSM 9485.</title>
        <authorList>
            <consortium name="US DOE Joint Genome Institute"/>
            <person name="Lucas S."/>
            <person name="Copeland A."/>
            <person name="Lapidus A."/>
            <person name="Glavina del Rio T."/>
            <person name="Dalin E."/>
            <person name="Tice H."/>
            <person name="Pitluck S."/>
            <person name="Foster B."/>
            <person name="Larimer F."/>
            <person name="Land M."/>
            <person name="Hauser L."/>
            <person name="Kyrpides N."/>
            <person name="Mikhailova N."/>
            <person name="Bryant D.A."/>
            <person name="Richardson P."/>
        </authorList>
    </citation>
    <scope>NUCLEOTIDE SEQUENCE [LARGE SCALE GENOMIC DNA]</scope>
    <source>
        <strain>MD-66 / DSM 9485</strain>
    </source>
</reference>
<dbReference type="EMBL" id="CP001337">
    <property type="protein sequence ID" value="ACL22954.1"/>
    <property type="molecule type" value="Genomic_DNA"/>
</dbReference>
<dbReference type="RefSeq" id="WP_012615320.1">
    <property type="nucleotide sequence ID" value="NC_011831.1"/>
</dbReference>
<dbReference type="SMR" id="B8GBK7"/>
<dbReference type="STRING" id="326427.Cagg_0001"/>
<dbReference type="KEGG" id="cag:Cagg_0001"/>
<dbReference type="eggNOG" id="COG0593">
    <property type="taxonomic scope" value="Bacteria"/>
</dbReference>
<dbReference type="HOGENOM" id="CLU_026910_3_1_0"/>
<dbReference type="OrthoDB" id="9807019at2"/>
<dbReference type="Proteomes" id="UP000002508">
    <property type="component" value="Chromosome"/>
</dbReference>
<dbReference type="GO" id="GO:0005737">
    <property type="term" value="C:cytoplasm"/>
    <property type="evidence" value="ECO:0007669"/>
    <property type="project" value="UniProtKB-SubCell"/>
</dbReference>
<dbReference type="GO" id="GO:0005886">
    <property type="term" value="C:plasma membrane"/>
    <property type="evidence" value="ECO:0007669"/>
    <property type="project" value="TreeGrafter"/>
</dbReference>
<dbReference type="GO" id="GO:0005524">
    <property type="term" value="F:ATP binding"/>
    <property type="evidence" value="ECO:0007669"/>
    <property type="project" value="UniProtKB-UniRule"/>
</dbReference>
<dbReference type="GO" id="GO:0016887">
    <property type="term" value="F:ATP hydrolysis activity"/>
    <property type="evidence" value="ECO:0007669"/>
    <property type="project" value="InterPro"/>
</dbReference>
<dbReference type="GO" id="GO:0003688">
    <property type="term" value="F:DNA replication origin binding"/>
    <property type="evidence" value="ECO:0007669"/>
    <property type="project" value="UniProtKB-UniRule"/>
</dbReference>
<dbReference type="GO" id="GO:0008289">
    <property type="term" value="F:lipid binding"/>
    <property type="evidence" value="ECO:0007669"/>
    <property type="project" value="UniProtKB-KW"/>
</dbReference>
<dbReference type="GO" id="GO:0006270">
    <property type="term" value="P:DNA replication initiation"/>
    <property type="evidence" value="ECO:0007669"/>
    <property type="project" value="UniProtKB-UniRule"/>
</dbReference>
<dbReference type="GO" id="GO:0006275">
    <property type="term" value="P:regulation of DNA replication"/>
    <property type="evidence" value="ECO:0007669"/>
    <property type="project" value="UniProtKB-UniRule"/>
</dbReference>
<dbReference type="CDD" id="cd00009">
    <property type="entry name" value="AAA"/>
    <property type="match status" value="1"/>
</dbReference>
<dbReference type="CDD" id="cd06571">
    <property type="entry name" value="Bac_DnaA_C"/>
    <property type="match status" value="1"/>
</dbReference>
<dbReference type="FunFam" id="1.10.8.60:FF:000003">
    <property type="entry name" value="Chromosomal replication initiator protein DnaA"/>
    <property type="match status" value="1"/>
</dbReference>
<dbReference type="FunFam" id="3.40.50.300:FF:000150">
    <property type="entry name" value="Chromosomal replication initiator protein DnaA"/>
    <property type="match status" value="1"/>
</dbReference>
<dbReference type="Gene3D" id="1.10.1750.10">
    <property type="match status" value="1"/>
</dbReference>
<dbReference type="Gene3D" id="1.10.8.60">
    <property type="match status" value="1"/>
</dbReference>
<dbReference type="Gene3D" id="3.30.300.180">
    <property type="match status" value="1"/>
</dbReference>
<dbReference type="Gene3D" id="3.40.50.300">
    <property type="entry name" value="P-loop containing nucleotide triphosphate hydrolases"/>
    <property type="match status" value="1"/>
</dbReference>
<dbReference type="HAMAP" id="MF_00377">
    <property type="entry name" value="DnaA_bact"/>
    <property type="match status" value="1"/>
</dbReference>
<dbReference type="InterPro" id="IPR003593">
    <property type="entry name" value="AAA+_ATPase"/>
</dbReference>
<dbReference type="InterPro" id="IPR001957">
    <property type="entry name" value="Chromosome_initiator_DnaA"/>
</dbReference>
<dbReference type="InterPro" id="IPR020591">
    <property type="entry name" value="Chromosome_initiator_DnaA-like"/>
</dbReference>
<dbReference type="InterPro" id="IPR018312">
    <property type="entry name" value="Chromosome_initiator_DnaA_CS"/>
</dbReference>
<dbReference type="InterPro" id="IPR013159">
    <property type="entry name" value="DnaA_C"/>
</dbReference>
<dbReference type="InterPro" id="IPR013317">
    <property type="entry name" value="DnaA_dom"/>
</dbReference>
<dbReference type="InterPro" id="IPR038454">
    <property type="entry name" value="DnaA_N_sf"/>
</dbReference>
<dbReference type="InterPro" id="IPR027417">
    <property type="entry name" value="P-loop_NTPase"/>
</dbReference>
<dbReference type="InterPro" id="IPR010921">
    <property type="entry name" value="Trp_repressor/repl_initiator"/>
</dbReference>
<dbReference type="NCBIfam" id="TIGR00362">
    <property type="entry name" value="DnaA"/>
    <property type="match status" value="1"/>
</dbReference>
<dbReference type="PANTHER" id="PTHR30050">
    <property type="entry name" value="CHROMOSOMAL REPLICATION INITIATOR PROTEIN DNAA"/>
    <property type="match status" value="1"/>
</dbReference>
<dbReference type="PANTHER" id="PTHR30050:SF2">
    <property type="entry name" value="CHROMOSOMAL REPLICATION INITIATOR PROTEIN DNAA"/>
    <property type="match status" value="1"/>
</dbReference>
<dbReference type="Pfam" id="PF00308">
    <property type="entry name" value="Bac_DnaA"/>
    <property type="match status" value="1"/>
</dbReference>
<dbReference type="Pfam" id="PF08299">
    <property type="entry name" value="Bac_DnaA_C"/>
    <property type="match status" value="1"/>
</dbReference>
<dbReference type="PRINTS" id="PR00051">
    <property type="entry name" value="DNAA"/>
</dbReference>
<dbReference type="SMART" id="SM00382">
    <property type="entry name" value="AAA"/>
    <property type="match status" value="1"/>
</dbReference>
<dbReference type="SMART" id="SM00760">
    <property type="entry name" value="Bac_DnaA_C"/>
    <property type="match status" value="1"/>
</dbReference>
<dbReference type="SUPFAM" id="SSF52540">
    <property type="entry name" value="P-loop containing nucleoside triphosphate hydrolases"/>
    <property type="match status" value="1"/>
</dbReference>
<dbReference type="SUPFAM" id="SSF48295">
    <property type="entry name" value="TrpR-like"/>
    <property type="match status" value="1"/>
</dbReference>
<dbReference type="PROSITE" id="PS01008">
    <property type="entry name" value="DNAA"/>
    <property type="match status" value="1"/>
</dbReference>
<gene>
    <name evidence="1" type="primary">dnaA</name>
    <name type="ordered locus">Cagg_0001</name>
</gene>